<evidence type="ECO:0000250" key="1">
    <source>
        <dbReference type="UniProtKB" id="A6T923"/>
    </source>
</evidence>
<evidence type="ECO:0000269" key="2">
    <source>
    </source>
</evidence>
<evidence type="ECO:0000305" key="3"/>
<protein>
    <recommendedName>
        <fullName>FAD-dependent urate hydroxylase</fullName>
        <ecNumber>1.14.13.113</ecNumber>
    </recommendedName>
</protein>
<gene>
    <name type="primary">hpxO</name>
</gene>
<dbReference type="EC" id="1.14.13.113"/>
<dbReference type="EMBL" id="EU653284">
    <property type="protein sequence ID" value="ACF60813.1"/>
    <property type="molecule type" value="Genomic_DNA"/>
</dbReference>
<dbReference type="RefSeq" id="WP_020804972.1">
    <property type="nucleotide sequence ID" value="NZ_WULK01000014.1"/>
</dbReference>
<dbReference type="SMR" id="B6D1N4"/>
<dbReference type="BioCyc" id="MetaCyc:MONOMER-15359"/>
<dbReference type="UniPathway" id="UPA00394"/>
<dbReference type="GO" id="GO:0071949">
    <property type="term" value="F:FAD binding"/>
    <property type="evidence" value="ECO:0000250"/>
    <property type="project" value="UniProtKB"/>
</dbReference>
<dbReference type="GO" id="GO:0102099">
    <property type="term" value="F:FAD-dependent urate hydroxylase activity"/>
    <property type="evidence" value="ECO:0007669"/>
    <property type="project" value="UniProtKB-EC"/>
</dbReference>
<dbReference type="GO" id="GO:0016709">
    <property type="term" value="F:oxidoreductase activity, acting on paired donors, with incorporation or reduction of molecular oxygen, NAD(P)H as one donor, and incorporation of one atom of oxygen"/>
    <property type="evidence" value="ECO:0000250"/>
    <property type="project" value="UniProtKB"/>
</dbReference>
<dbReference type="GO" id="GO:0004846">
    <property type="term" value="F:urate oxidase activity"/>
    <property type="evidence" value="ECO:0007669"/>
    <property type="project" value="InterPro"/>
</dbReference>
<dbReference type="GO" id="GO:0006144">
    <property type="term" value="P:purine nucleobase metabolic process"/>
    <property type="evidence" value="ECO:0007669"/>
    <property type="project" value="UniProtKB-KW"/>
</dbReference>
<dbReference type="GO" id="GO:0019628">
    <property type="term" value="P:urate catabolic process"/>
    <property type="evidence" value="ECO:0000250"/>
    <property type="project" value="UniProtKB"/>
</dbReference>
<dbReference type="FunFam" id="3.50.50.60:FF:000269">
    <property type="entry name" value="FAD-dependent urate hydroxylase"/>
    <property type="match status" value="1"/>
</dbReference>
<dbReference type="Gene3D" id="3.50.50.60">
    <property type="entry name" value="FAD/NAD(P)-binding domain"/>
    <property type="match status" value="1"/>
</dbReference>
<dbReference type="InterPro" id="IPR002938">
    <property type="entry name" value="FAD-bd"/>
</dbReference>
<dbReference type="InterPro" id="IPR050493">
    <property type="entry name" value="FAD-dep_Monooxygenase_BioMet"/>
</dbReference>
<dbReference type="InterPro" id="IPR036188">
    <property type="entry name" value="FAD/NAD-bd_sf"/>
</dbReference>
<dbReference type="InterPro" id="IPR047712">
    <property type="entry name" value="HpxO"/>
</dbReference>
<dbReference type="NCBIfam" id="NF033623">
    <property type="entry name" value="urate_HpxO"/>
    <property type="match status" value="1"/>
</dbReference>
<dbReference type="PANTHER" id="PTHR13789">
    <property type="entry name" value="MONOOXYGENASE"/>
    <property type="match status" value="1"/>
</dbReference>
<dbReference type="PANTHER" id="PTHR13789:SF309">
    <property type="entry name" value="PUTATIVE (AFU_ORTHOLOGUE AFUA_6G14510)-RELATED"/>
    <property type="match status" value="1"/>
</dbReference>
<dbReference type="Pfam" id="PF01494">
    <property type="entry name" value="FAD_binding_3"/>
    <property type="match status" value="1"/>
</dbReference>
<dbReference type="PRINTS" id="PR00420">
    <property type="entry name" value="RNGMNOXGNASE"/>
</dbReference>
<dbReference type="SUPFAM" id="SSF51905">
    <property type="entry name" value="FAD/NAD(P)-binding domain"/>
    <property type="match status" value="1"/>
</dbReference>
<feature type="chain" id="PRO_0000418847" description="FAD-dependent urate hydroxylase">
    <location>
        <begin position="1"/>
        <end position="384"/>
    </location>
</feature>
<feature type="binding site" evidence="1">
    <location>
        <position position="11"/>
    </location>
    <ligand>
        <name>FAD</name>
        <dbReference type="ChEBI" id="CHEBI:57692"/>
    </ligand>
</feature>
<feature type="binding site" evidence="1">
    <location>
        <begin position="30"/>
        <end position="31"/>
    </location>
    <ligand>
        <name>FAD</name>
        <dbReference type="ChEBI" id="CHEBI:57692"/>
    </ligand>
</feature>
<feature type="binding site" evidence="1">
    <location>
        <position position="43"/>
    </location>
    <ligand>
        <name>FAD</name>
        <dbReference type="ChEBI" id="CHEBI:57692"/>
    </ligand>
</feature>
<feature type="binding site" evidence="1">
    <location>
        <position position="125"/>
    </location>
    <ligand>
        <name>FAD</name>
        <dbReference type="ChEBI" id="CHEBI:57692"/>
    </ligand>
</feature>
<feature type="binding site" evidence="1">
    <location>
        <position position="178"/>
    </location>
    <ligand>
        <name>substrate</name>
    </ligand>
</feature>
<feature type="binding site" evidence="1">
    <location>
        <position position="204"/>
    </location>
    <ligand>
        <name>substrate</name>
    </ligand>
</feature>
<feature type="binding site" evidence="1">
    <location>
        <begin position="216"/>
        <end position="218"/>
    </location>
    <ligand>
        <name>substrate</name>
    </ligand>
</feature>
<feature type="binding site" evidence="1">
    <location>
        <position position="285"/>
    </location>
    <ligand>
        <name>FAD</name>
        <dbReference type="ChEBI" id="CHEBI:57692"/>
    </ligand>
</feature>
<feature type="binding site" evidence="1">
    <location>
        <begin position="295"/>
        <end position="299"/>
    </location>
    <ligand>
        <name>FAD</name>
        <dbReference type="ChEBI" id="CHEBI:57692"/>
    </ligand>
</feature>
<feature type="site" description="Involved in substrate activation for the transfer of oxygen from the flavin hydroperoxide" evidence="1">
    <location>
        <position position="204"/>
    </location>
</feature>
<name>HPXO_KLEPN</name>
<proteinExistence type="inferred from homology"/>
<organism>
    <name type="scientific">Klebsiella pneumoniae</name>
    <dbReference type="NCBI Taxonomy" id="573"/>
    <lineage>
        <taxon>Bacteria</taxon>
        <taxon>Pseudomonadati</taxon>
        <taxon>Pseudomonadota</taxon>
        <taxon>Gammaproteobacteria</taxon>
        <taxon>Enterobacterales</taxon>
        <taxon>Enterobacteriaceae</taxon>
        <taxon>Klebsiella/Raoultella group</taxon>
        <taxon>Klebsiella</taxon>
        <taxon>Klebsiella pneumoniae complex</taxon>
    </lineage>
</organism>
<keyword id="KW-0274">FAD</keyword>
<keyword id="KW-0285">Flavoprotein</keyword>
<keyword id="KW-0503">Monooxygenase</keyword>
<keyword id="KW-0520">NAD</keyword>
<keyword id="KW-0560">Oxidoreductase</keyword>
<keyword id="KW-0659">Purine metabolism</keyword>
<reference key="1">
    <citation type="journal article" date="2008" name="J. Bacteriol.">
        <title>The hpx genetic system for hypoxanthine assimilation as a nitrogen source in Klebsiella pneumoniae: gene organization and transcriptional regulation.</title>
        <authorList>
            <person name="de la Riva L."/>
            <person name="Badia J."/>
            <person name="Aguilar J."/>
            <person name="Bender R.A."/>
            <person name="Baldoma L."/>
        </authorList>
    </citation>
    <scope>NUCLEOTIDE SEQUENCE [GENOMIC DNA]</scope>
    <scope>PATHWAY</scope>
    <scope>DISRUPTION PHENOTYPE</scope>
    <scope>GENE NAME</scope>
    <source>
        <strain>KC2653</strain>
    </source>
</reference>
<sequence>MKAIVIGAGIGGLSAAVALKQSGIDCDVYEAVKEIKPVGAAISVWPNGVKCMAHLGMGDIMETFGGPLRRMAYRDFRSGENMTQFSLAPLIERTGSRPCPVSRAELQREMLDYWGRDSVQFGKRVTRCEEDADGVTVWFTDGSSASGDLLIAADGSHSALRPWVLGFTPQRRYAGYVNWNGLVEIDEALAPGDQWTTFVGEGKRVSLMPVSAGRFYFFFDVPLPAGLAEDRDTLRADLSRYFAGWAPPVQKLIAALDPQTTNRIEIHDIEPFSRLVRGRVALLGDAGHSTTPDIGQGGCAAMEDAVVLGAVFRQTRDIAAALCEYEAQRCDRVRDLVLKARKRCDITHGKDMQLTEAWYQELREETGERIINGMCDTILSGPLG</sequence>
<comment type="function">
    <text evidence="1">Catalyzes the hydroxylation of uric acid to 5-hydroxyisourate.</text>
</comment>
<comment type="catalytic activity">
    <reaction evidence="1">
        <text>urate + NADH + O2 + H(+) = 5-hydroxyisourate + NAD(+) + H2O</text>
        <dbReference type="Rhea" id="RHEA:27329"/>
        <dbReference type="ChEBI" id="CHEBI:15377"/>
        <dbReference type="ChEBI" id="CHEBI:15378"/>
        <dbReference type="ChEBI" id="CHEBI:15379"/>
        <dbReference type="ChEBI" id="CHEBI:17775"/>
        <dbReference type="ChEBI" id="CHEBI:18072"/>
        <dbReference type="ChEBI" id="CHEBI:57540"/>
        <dbReference type="ChEBI" id="CHEBI:57945"/>
        <dbReference type="EC" id="1.14.13.113"/>
    </reaction>
</comment>
<comment type="cofactor">
    <cofactor evidence="1">
        <name>FAD</name>
        <dbReference type="ChEBI" id="CHEBI:57692"/>
    </cofactor>
</comment>
<comment type="pathway">
    <text evidence="2">Purine metabolism; urate degradation.</text>
</comment>
<comment type="disruption phenotype">
    <text evidence="2">Mutants show impaired utilization of both hypoxanthine and uric acid as nitrogen sources.</text>
</comment>
<comment type="similarity">
    <text evidence="3">Belongs to the FAD-dependent urate hydroxylase family.</text>
</comment>
<accession>B6D1N4</accession>